<evidence type="ECO:0000255" key="1">
    <source>
        <dbReference type="HAMAP-Rule" id="MF_00083"/>
    </source>
</evidence>
<reference key="1">
    <citation type="journal article" date="2008" name="BMC Genomics">
        <title>Acidithiobacillus ferrooxidans metabolism: from genome sequence to industrial applications.</title>
        <authorList>
            <person name="Valdes J."/>
            <person name="Pedroso I."/>
            <person name="Quatrini R."/>
            <person name="Dodson R.J."/>
            <person name="Tettelin H."/>
            <person name="Blake R. II"/>
            <person name="Eisen J.A."/>
            <person name="Holmes D.S."/>
        </authorList>
    </citation>
    <scope>NUCLEOTIDE SEQUENCE [LARGE SCALE GENOMIC DNA]</scope>
    <source>
        <strain>ATCC 23270 / DSM 14882 / CIP 104768 / NCIMB 8455</strain>
    </source>
</reference>
<feature type="chain" id="PRO_1000192948" description="Peptidyl-tRNA hydrolase">
    <location>
        <begin position="1"/>
        <end position="189"/>
    </location>
</feature>
<feature type="active site" description="Proton acceptor" evidence="1">
    <location>
        <position position="20"/>
    </location>
</feature>
<feature type="binding site" evidence="1">
    <location>
        <position position="15"/>
    </location>
    <ligand>
        <name>tRNA</name>
        <dbReference type="ChEBI" id="CHEBI:17843"/>
    </ligand>
</feature>
<feature type="binding site" evidence="1">
    <location>
        <position position="66"/>
    </location>
    <ligand>
        <name>tRNA</name>
        <dbReference type="ChEBI" id="CHEBI:17843"/>
    </ligand>
</feature>
<feature type="binding site" evidence="1">
    <location>
        <position position="68"/>
    </location>
    <ligand>
        <name>tRNA</name>
        <dbReference type="ChEBI" id="CHEBI:17843"/>
    </ligand>
</feature>
<feature type="binding site" evidence="1">
    <location>
        <position position="114"/>
    </location>
    <ligand>
        <name>tRNA</name>
        <dbReference type="ChEBI" id="CHEBI:17843"/>
    </ligand>
</feature>
<feature type="site" description="Discriminates between blocked and unblocked aminoacyl-tRNA" evidence="1">
    <location>
        <position position="10"/>
    </location>
</feature>
<feature type="site" description="Stabilizes the basic form of H active site to accept a proton" evidence="1">
    <location>
        <position position="93"/>
    </location>
</feature>
<dbReference type="EC" id="3.1.1.29" evidence="1"/>
<dbReference type="EMBL" id="CP001219">
    <property type="protein sequence ID" value="ACK78537.1"/>
    <property type="molecule type" value="Genomic_DNA"/>
</dbReference>
<dbReference type="RefSeq" id="WP_012537005.1">
    <property type="nucleotide sequence ID" value="NC_011761.1"/>
</dbReference>
<dbReference type="SMR" id="B7J502"/>
<dbReference type="STRING" id="243159.AFE_2146"/>
<dbReference type="PaxDb" id="243159-AFE_2146"/>
<dbReference type="GeneID" id="65281271"/>
<dbReference type="KEGG" id="afr:AFE_2146"/>
<dbReference type="eggNOG" id="COG0193">
    <property type="taxonomic scope" value="Bacteria"/>
</dbReference>
<dbReference type="HOGENOM" id="CLU_062456_3_1_6"/>
<dbReference type="Proteomes" id="UP000001362">
    <property type="component" value="Chromosome"/>
</dbReference>
<dbReference type="GO" id="GO:0005737">
    <property type="term" value="C:cytoplasm"/>
    <property type="evidence" value="ECO:0007669"/>
    <property type="project" value="UniProtKB-SubCell"/>
</dbReference>
<dbReference type="GO" id="GO:0004045">
    <property type="term" value="F:peptidyl-tRNA hydrolase activity"/>
    <property type="evidence" value="ECO:0007669"/>
    <property type="project" value="UniProtKB-UniRule"/>
</dbReference>
<dbReference type="GO" id="GO:0000049">
    <property type="term" value="F:tRNA binding"/>
    <property type="evidence" value="ECO:0007669"/>
    <property type="project" value="UniProtKB-UniRule"/>
</dbReference>
<dbReference type="GO" id="GO:0006515">
    <property type="term" value="P:protein quality control for misfolded or incompletely synthesized proteins"/>
    <property type="evidence" value="ECO:0007669"/>
    <property type="project" value="UniProtKB-UniRule"/>
</dbReference>
<dbReference type="GO" id="GO:0072344">
    <property type="term" value="P:rescue of stalled ribosome"/>
    <property type="evidence" value="ECO:0007669"/>
    <property type="project" value="UniProtKB-UniRule"/>
</dbReference>
<dbReference type="CDD" id="cd00462">
    <property type="entry name" value="PTH"/>
    <property type="match status" value="1"/>
</dbReference>
<dbReference type="FunFam" id="3.40.50.1470:FF:000001">
    <property type="entry name" value="Peptidyl-tRNA hydrolase"/>
    <property type="match status" value="1"/>
</dbReference>
<dbReference type="Gene3D" id="3.40.50.1470">
    <property type="entry name" value="Peptidyl-tRNA hydrolase"/>
    <property type="match status" value="1"/>
</dbReference>
<dbReference type="HAMAP" id="MF_00083">
    <property type="entry name" value="Pept_tRNA_hydro_bact"/>
    <property type="match status" value="1"/>
</dbReference>
<dbReference type="InterPro" id="IPR001328">
    <property type="entry name" value="Pept_tRNA_hydro"/>
</dbReference>
<dbReference type="InterPro" id="IPR018171">
    <property type="entry name" value="Pept_tRNA_hydro_CS"/>
</dbReference>
<dbReference type="InterPro" id="IPR036416">
    <property type="entry name" value="Pept_tRNA_hydro_sf"/>
</dbReference>
<dbReference type="NCBIfam" id="TIGR00447">
    <property type="entry name" value="pth"/>
    <property type="match status" value="1"/>
</dbReference>
<dbReference type="PANTHER" id="PTHR17224">
    <property type="entry name" value="PEPTIDYL-TRNA HYDROLASE"/>
    <property type="match status" value="1"/>
</dbReference>
<dbReference type="PANTHER" id="PTHR17224:SF1">
    <property type="entry name" value="PEPTIDYL-TRNA HYDROLASE"/>
    <property type="match status" value="1"/>
</dbReference>
<dbReference type="Pfam" id="PF01195">
    <property type="entry name" value="Pept_tRNA_hydro"/>
    <property type="match status" value="1"/>
</dbReference>
<dbReference type="SUPFAM" id="SSF53178">
    <property type="entry name" value="Peptidyl-tRNA hydrolase-like"/>
    <property type="match status" value="1"/>
</dbReference>
<dbReference type="PROSITE" id="PS01196">
    <property type="entry name" value="PEPT_TRNA_HYDROL_2"/>
    <property type="match status" value="1"/>
</dbReference>
<protein>
    <recommendedName>
        <fullName evidence="1">Peptidyl-tRNA hydrolase</fullName>
        <shortName evidence="1">Pth</shortName>
        <ecNumber evidence="1">3.1.1.29</ecNumber>
    </recommendedName>
</protein>
<organism>
    <name type="scientific">Acidithiobacillus ferrooxidans (strain ATCC 23270 / DSM 14882 / CIP 104768 / NCIMB 8455)</name>
    <name type="common">Ferrobacillus ferrooxidans (strain ATCC 23270)</name>
    <dbReference type="NCBI Taxonomy" id="243159"/>
    <lineage>
        <taxon>Bacteria</taxon>
        <taxon>Pseudomonadati</taxon>
        <taxon>Pseudomonadota</taxon>
        <taxon>Acidithiobacillia</taxon>
        <taxon>Acidithiobacillales</taxon>
        <taxon>Acidithiobacillaceae</taxon>
        <taxon>Acidithiobacillus</taxon>
    </lineage>
</organism>
<name>PTH_ACIF2</name>
<keyword id="KW-0963">Cytoplasm</keyword>
<keyword id="KW-0378">Hydrolase</keyword>
<keyword id="KW-1185">Reference proteome</keyword>
<keyword id="KW-0694">RNA-binding</keyword>
<keyword id="KW-0820">tRNA-binding</keyword>
<gene>
    <name evidence="1" type="primary">pth</name>
    <name type="ordered locus">AFE_2146</name>
</gene>
<comment type="function">
    <text evidence="1">Hydrolyzes ribosome-free peptidyl-tRNAs (with 1 or more amino acids incorporated), which drop off the ribosome during protein synthesis, or as a result of ribosome stalling.</text>
</comment>
<comment type="function">
    <text evidence="1">Catalyzes the release of premature peptidyl moieties from peptidyl-tRNA molecules trapped in stalled 50S ribosomal subunits, and thus maintains levels of free tRNAs and 50S ribosomes.</text>
</comment>
<comment type="catalytic activity">
    <reaction evidence="1">
        <text>an N-acyl-L-alpha-aminoacyl-tRNA + H2O = an N-acyl-L-amino acid + a tRNA + H(+)</text>
        <dbReference type="Rhea" id="RHEA:54448"/>
        <dbReference type="Rhea" id="RHEA-COMP:10123"/>
        <dbReference type="Rhea" id="RHEA-COMP:13883"/>
        <dbReference type="ChEBI" id="CHEBI:15377"/>
        <dbReference type="ChEBI" id="CHEBI:15378"/>
        <dbReference type="ChEBI" id="CHEBI:59874"/>
        <dbReference type="ChEBI" id="CHEBI:78442"/>
        <dbReference type="ChEBI" id="CHEBI:138191"/>
        <dbReference type="EC" id="3.1.1.29"/>
    </reaction>
</comment>
<comment type="subunit">
    <text evidence="1">Monomer.</text>
</comment>
<comment type="subcellular location">
    <subcellularLocation>
        <location evidence="1">Cytoplasm</location>
    </subcellularLocation>
</comment>
<comment type="similarity">
    <text evidence="1">Belongs to the PTH family.</text>
</comment>
<sequence>MDWLLAGLGNPGAEYARTRHNAGFWTLQTLADRVGASLRMEKRWHCLAATARASGLELGLCMPQDFMNRSGGPVQAMAAFYKVAAERILVMHDELDLPPGAARLKRGGGHGGHNGLRDLDRALGTRDYWRLRIGIGHPGHKDAVIPYVLSAPPPADKTLIDEAIERSLGVLPDFLCGRTDAAQKSLHSD</sequence>
<proteinExistence type="inferred from homology"/>
<accession>B7J502</accession>